<evidence type="ECO:0000255" key="1">
    <source>
        <dbReference type="HAMAP-Rule" id="MF_01350"/>
    </source>
</evidence>
<protein>
    <recommendedName>
        <fullName evidence="1">NADH-quinone oxidoreductase subunit H</fullName>
        <ecNumber evidence="1">7.1.1.-</ecNumber>
    </recommendedName>
    <alternativeName>
        <fullName evidence="1">NADH dehydrogenase I subunit H</fullName>
    </alternativeName>
    <alternativeName>
        <fullName evidence="1">NDH-1 subunit H</fullName>
    </alternativeName>
</protein>
<comment type="function">
    <text evidence="1">NDH-1 shuttles electrons from NADH, via FMN and iron-sulfur (Fe-S) centers, to quinones in the respiratory chain. The immediate electron acceptor for the enzyme in this species is believed to be ubiquinone. Couples the redox reaction to proton translocation (for every two electrons transferred, four hydrogen ions are translocated across the cytoplasmic membrane), and thus conserves the redox energy in a proton gradient. This subunit may bind ubiquinone.</text>
</comment>
<comment type="catalytic activity">
    <reaction evidence="1">
        <text>a quinone + NADH + 5 H(+)(in) = a quinol + NAD(+) + 4 H(+)(out)</text>
        <dbReference type="Rhea" id="RHEA:57888"/>
        <dbReference type="ChEBI" id="CHEBI:15378"/>
        <dbReference type="ChEBI" id="CHEBI:24646"/>
        <dbReference type="ChEBI" id="CHEBI:57540"/>
        <dbReference type="ChEBI" id="CHEBI:57945"/>
        <dbReference type="ChEBI" id="CHEBI:132124"/>
    </reaction>
</comment>
<comment type="subunit">
    <text evidence="1">NDH-1 is composed of 14 different subunits. Subunits NuoA, H, J, K, L, M, N constitute the membrane sector of the complex.</text>
</comment>
<comment type="subcellular location">
    <subcellularLocation>
        <location evidence="1">Cell inner membrane</location>
        <topology evidence="1">Multi-pass membrane protein</topology>
    </subcellularLocation>
</comment>
<comment type="similarity">
    <text evidence="1">Belongs to the complex I subunit 1 family.</text>
</comment>
<sequence length="354" mass="39188">MSLFDTINSGGAQLLGVAWPTVWALVRILVVAVVILLCVAYLILWERKLIGWMHVRLGPNRVGPAGLLQPIADVLKLLLKEVIRPTAASRWLYLVAPVMTVVPAFAVWAVIPFQAGAVLANINAGLLYAMAISSIGVYAVILAGWASNSKYAFLGAMRAAAQMVSYEISMGFALVLVLMTAGSLNLSEIVGSQQHGFFAGHGVNFLSWNWLPLLPVFVIYFISGIAETNRHPFDVVEGESEIVAGHMIDYSGMAFALFFLAEYINMIVISALAATLFLGGWDAPFEFLSFIPGIFWLVLKIFALLSVFIWARATFPRYRYDQIMRLGWKVFLPVCVFWVIVVGFWMMSPLNIWK</sequence>
<feature type="chain" id="PRO_1000067735" description="NADH-quinone oxidoreductase subunit H">
    <location>
        <begin position="1"/>
        <end position="354"/>
    </location>
</feature>
<feature type="transmembrane region" description="Helical" evidence="1">
    <location>
        <begin position="25"/>
        <end position="45"/>
    </location>
</feature>
<feature type="transmembrane region" description="Helical" evidence="1">
    <location>
        <begin position="91"/>
        <end position="111"/>
    </location>
</feature>
<feature type="transmembrane region" description="Helical" evidence="1">
    <location>
        <begin position="126"/>
        <end position="146"/>
    </location>
</feature>
<feature type="transmembrane region" description="Helical" evidence="1">
    <location>
        <begin position="170"/>
        <end position="190"/>
    </location>
</feature>
<feature type="transmembrane region" description="Helical" evidence="1">
    <location>
        <begin position="205"/>
        <end position="225"/>
    </location>
</feature>
<feature type="transmembrane region" description="Helical" evidence="1">
    <location>
        <begin position="253"/>
        <end position="273"/>
    </location>
</feature>
<feature type="transmembrane region" description="Helical" evidence="1">
    <location>
        <begin position="290"/>
        <end position="310"/>
    </location>
</feature>
<feature type="transmembrane region" description="Helical" evidence="1">
    <location>
        <begin position="330"/>
        <end position="350"/>
    </location>
</feature>
<keyword id="KW-0997">Cell inner membrane</keyword>
<keyword id="KW-1003">Cell membrane</keyword>
<keyword id="KW-0472">Membrane</keyword>
<keyword id="KW-0520">NAD</keyword>
<keyword id="KW-0874">Quinone</keyword>
<keyword id="KW-1278">Translocase</keyword>
<keyword id="KW-0812">Transmembrane</keyword>
<keyword id="KW-1133">Transmembrane helix</keyword>
<keyword id="KW-0830">Ubiquinone</keyword>
<gene>
    <name evidence="1" type="primary">nuoH</name>
    <name type="ordered locus">BURPS668_1297</name>
</gene>
<reference key="1">
    <citation type="journal article" date="2010" name="Genome Biol. Evol.">
        <title>Continuing evolution of Burkholderia mallei through genome reduction and large-scale rearrangements.</title>
        <authorList>
            <person name="Losada L."/>
            <person name="Ronning C.M."/>
            <person name="DeShazer D."/>
            <person name="Woods D."/>
            <person name="Fedorova N."/>
            <person name="Kim H.S."/>
            <person name="Shabalina S.A."/>
            <person name="Pearson T.R."/>
            <person name="Brinkac L."/>
            <person name="Tan P."/>
            <person name="Nandi T."/>
            <person name="Crabtree J."/>
            <person name="Badger J."/>
            <person name="Beckstrom-Sternberg S."/>
            <person name="Saqib M."/>
            <person name="Schutzer S.E."/>
            <person name="Keim P."/>
            <person name="Nierman W.C."/>
        </authorList>
    </citation>
    <scope>NUCLEOTIDE SEQUENCE [LARGE SCALE GENOMIC DNA]</scope>
    <source>
        <strain>668</strain>
    </source>
</reference>
<dbReference type="EC" id="7.1.1.-" evidence="1"/>
<dbReference type="EMBL" id="CP000570">
    <property type="protein sequence ID" value="ABN84742.1"/>
    <property type="molecule type" value="Genomic_DNA"/>
</dbReference>
<dbReference type="RefSeq" id="WP_004196426.1">
    <property type="nucleotide sequence ID" value="NC_009074.1"/>
</dbReference>
<dbReference type="SMR" id="A3N7M4"/>
<dbReference type="GeneID" id="93059701"/>
<dbReference type="KEGG" id="bpd:BURPS668_1297"/>
<dbReference type="HOGENOM" id="CLU_015134_0_1_4"/>
<dbReference type="GO" id="GO:0005886">
    <property type="term" value="C:plasma membrane"/>
    <property type="evidence" value="ECO:0007669"/>
    <property type="project" value="UniProtKB-SubCell"/>
</dbReference>
<dbReference type="GO" id="GO:0003954">
    <property type="term" value="F:NADH dehydrogenase activity"/>
    <property type="evidence" value="ECO:0007669"/>
    <property type="project" value="TreeGrafter"/>
</dbReference>
<dbReference type="GO" id="GO:0016655">
    <property type="term" value="F:oxidoreductase activity, acting on NAD(P)H, quinone or similar compound as acceptor"/>
    <property type="evidence" value="ECO:0007669"/>
    <property type="project" value="UniProtKB-UniRule"/>
</dbReference>
<dbReference type="GO" id="GO:0048038">
    <property type="term" value="F:quinone binding"/>
    <property type="evidence" value="ECO:0007669"/>
    <property type="project" value="UniProtKB-KW"/>
</dbReference>
<dbReference type="GO" id="GO:0009060">
    <property type="term" value="P:aerobic respiration"/>
    <property type="evidence" value="ECO:0007669"/>
    <property type="project" value="TreeGrafter"/>
</dbReference>
<dbReference type="HAMAP" id="MF_01350">
    <property type="entry name" value="NDH1_NuoH"/>
    <property type="match status" value="1"/>
</dbReference>
<dbReference type="InterPro" id="IPR001694">
    <property type="entry name" value="NADH_UbQ_OxRdtase_su1/FPO"/>
</dbReference>
<dbReference type="InterPro" id="IPR018086">
    <property type="entry name" value="NADH_UbQ_OxRdtase_su1_CS"/>
</dbReference>
<dbReference type="NCBIfam" id="NF004741">
    <property type="entry name" value="PRK06076.1-2"/>
    <property type="match status" value="1"/>
</dbReference>
<dbReference type="NCBIfam" id="NF004742">
    <property type="entry name" value="PRK06076.1-3"/>
    <property type="match status" value="1"/>
</dbReference>
<dbReference type="PANTHER" id="PTHR11432">
    <property type="entry name" value="NADH DEHYDROGENASE SUBUNIT 1"/>
    <property type="match status" value="1"/>
</dbReference>
<dbReference type="PANTHER" id="PTHR11432:SF3">
    <property type="entry name" value="NADH-UBIQUINONE OXIDOREDUCTASE CHAIN 1"/>
    <property type="match status" value="1"/>
</dbReference>
<dbReference type="Pfam" id="PF00146">
    <property type="entry name" value="NADHdh"/>
    <property type="match status" value="1"/>
</dbReference>
<dbReference type="PROSITE" id="PS00668">
    <property type="entry name" value="COMPLEX1_ND1_2"/>
    <property type="match status" value="1"/>
</dbReference>
<name>NUOH_BURP6</name>
<organism>
    <name type="scientific">Burkholderia pseudomallei (strain 668)</name>
    <dbReference type="NCBI Taxonomy" id="320373"/>
    <lineage>
        <taxon>Bacteria</taxon>
        <taxon>Pseudomonadati</taxon>
        <taxon>Pseudomonadota</taxon>
        <taxon>Betaproteobacteria</taxon>
        <taxon>Burkholderiales</taxon>
        <taxon>Burkholderiaceae</taxon>
        <taxon>Burkholderia</taxon>
        <taxon>pseudomallei group</taxon>
    </lineage>
</organism>
<proteinExistence type="inferred from homology"/>
<accession>A3N7M4</accession>